<gene>
    <name type="primary">GAN</name>
    <name type="synonym">GAN1</name>
    <name type="synonym">KLHL16</name>
</gene>
<organism>
    <name type="scientific">Homo sapiens</name>
    <name type="common">Human</name>
    <dbReference type="NCBI Taxonomy" id="9606"/>
    <lineage>
        <taxon>Eukaryota</taxon>
        <taxon>Metazoa</taxon>
        <taxon>Chordata</taxon>
        <taxon>Craniata</taxon>
        <taxon>Vertebrata</taxon>
        <taxon>Euteleostomi</taxon>
        <taxon>Mammalia</taxon>
        <taxon>Eutheria</taxon>
        <taxon>Euarchontoglires</taxon>
        <taxon>Primates</taxon>
        <taxon>Haplorrhini</taxon>
        <taxon>Catarrhini</taxon>
        <taxon>Hominidae</taxon>
        <taxon>Homo</taxon>
    </lineage>
</organism>
<keyword id="KW-0002">3D-structure</keyword>
<keyword id="KW-0963">Cytoplasm</keyword>
<keyword id="KW-0206">Cytoskeleton</keyword>
<keyword id="KW-0225">Disease variant</keyword>
<keyword id="KW-0880">Kelch repeat</keyword>
<keyword id="KW-0523">Neurodegeneration</keyword>
<keyword id="KW-0622">Neuropathy</keyword>
<keyword id="KW-1267">Proteomics identification</keyword>
<keyword id="KW-1185">Reference proteome</keyword>
<keyword id="KW-0677">Repeat</keyword>
<keyword id="KW-0832">Ubl conjugation</keyword>
<keyword id="KW-0833">Ubl conjugation pathway</keyword>
<protein>
    <recommendedName>
        <fullName>Gigaxonin</fullName>
    </recommendedName>
    <alternativeName>
        <fullName>Kelch-like protein 16</fullName>
    </alternativeName>
</protein>
<proteinExistence type="evidence at protein level"/>
<name>GAN_HUMAN</name>
<accession>Q9H2C0</accession>
<comment type="function">
    <text evidence="4 7 8 9">Probable cytoskeletal component that directly or indirectly plays an important role in neurofilament architecture. May act as a substrate-specific adapter of an E3 ubiquitin-protein ligase complex which mediates the ubiquitination and subsequent proteasomal degradation of target proteins. Controls degradation of TBCB. Controls degradation of MAP1B and MAP1S, and is critical for neuronal maintenance and survival.</text>
</comment>
<comment type="pathway">
    <text>Protein modification; protein ubiquitination.</text>
</comment>
<comment type="subunit">
    <text evidence="4 6 7 8 9">Interacts with TBCB. Interacts with CUL3. Part of a complex that contains CUL3, RBX1 and GAN. Interacts (via BTB domain) with UBA1. Interacts (via Kelch domains) with MAP1B (via C-terminus) and MAP1S (via C-terminus).</text>
</comment>
<comment type="interaction">
    <interactant intactId="EBI-764342">
        <id>Q9H2C0</id>
    </interactant>
    <interactant intactId="EBI-764611">
        <id>P46821</id>
        <label>MAP1B</label>
    </interactant>
    <organismsDiffer>false</organismsDiffer>
    <experiments>3</experiments>
</comment>
<comment type="interaction">
    <interactant intactId="EBI-764342">
        <id>Q9H2C0</id>
    </interactant>
    <interactant intactId="EBI-744342">
        <id>Q8IVD9</id>
        <label>NUDCD3</label>
    </interactant>
    <organismsDiffer>false</organismsDiffer>
    <experiments>5</experiments>
</comment>
<comment type="interaction">
    <interactant intactId="EBI-764342">
        <id>Q9H2C0</id>
    </interactant>
    <interactant intactId="EBI-21251460">
        <id>O60260-5</id>
        <label>PRKN</label>
    </interactant>
    <organismsDiffer>false</organismsDiffer>
    <experiments>3</experiments>
</comment>
<comment type="interaction">
    <interactant intactId="EBI-764342">
        <id>Q9H2C0</id>
    </interactant>
    <interactant intactId="EBI-476295">
        <id>P31947</id>
        <label>SFN</label>
    </interactant>
    <organismsDiffer>false</organismsDiffer>
    <experiments>3</experiments>
</comment>
<comment type="interaction">
    <interactant intactId="EBI-764342">
        <id>Q9H2C0</id>
    </interactant>
    <interactant intactId="EBI-764356">
        <id>Q99426</id>
        <label>TBCB</label>
    </interactant>
    <organismsDiffer>false</organismsDiffer>
    <experiments>3</experiments>
</comment>
<comment type="interaction">
    <interactant intactId="EBI-764342">
        <id>Q9H2C0</id>
    </interactant>
    <interactant intactId="EBI-709688">
        <id>P22314</id>
        <label>UBA1</label>
    </interactant>
    <organismsDiffer>false</organismsDiffer>
    <experiments>3</experiments>
</comment>
<comment type="interaction">
    <interactant intactId="EBI-764342">
        <id>Q9H2C0</id>
    </interactant>
    <interactant intactId="EBI-12157263">
        <id>P40337-2</id>
        <label>VHL</label>
    </interactant>
    <organismsDiffer>false</organismsDiffer>
    <experiments>3</experiments>
</comment>
<comment type="interaction">
    <interactant intactId="EBI-764342">
        <id>Q9H2C0</id>
    </interactant>
    <interactant intactId="EBI-356498">
        <id>P62258</id>
        <label>YWHAE</label>
    </interactant>
    <organismsDiffer>false</organismsDiffer>
    <experiments>2</experiments>
</comment>
<comment type="interaction">
    <interactant intactId="EBI-764342">
        <id>Q9H2C0</id>
    </interactant>
    <interactant intactId="EBI-40204881">
        <id>Q5U300</id>
        <label>Uba1</label>
    </interactant>
    <organismsDiffer>true</organismsDiffer>
    <experiments>2</experiments>
</comment>
<comment type="subcellular location">
    <subcellularLocation>
        <location>Cytoplasm</location>
    </subcellularLocation>
    <subcellularLocation>
        <location>Cytoplasm</location>
        <location>Cytoskeleton</location>
    </subcellularLocation>
</comment>
<comment type="tissue specificity">
    <text evidence="4">Expressed in brain, heart and muscle.</text>
</comment>
<comment type="PTM">
    <text evidence="7">Ubiquitinated by E3 ubiquitin ligase complex formed by CUL3 and RBX1 and probably targeted for proteasome-independent degradation.</text>
</comment>
<comment type="disease" evidence="2 3 5 9 10 11">
    <disease id="DI-01658">
        <name>Giant axonal neuropathy 1, autosomal recessive</name>
        <acronym>GAN1</acronym>
        <description>A severe autosomal recessive sensorimotor neuropathy affecting both the peripheral nerves and the central nervous system. Axonal loss and the presence of giant axonal swellings filled with neurofilaments on nerve biopsies are the hallmarks of this neurodegenerative disorder.</description>
        <dbReference type="MIM" id="256850"/>
    </disease>
    <text>The disease is caused by variants affecting the gene represented in this entry.</text>
</comment>
<comment type="online information" name="Inherited peripheral neuropathies mutation db">
    <link uri="https://uantwerpen.vib.be/CMTMutations"/>
</comment>
<reference key="1">
    <citation type="journal article" date="2000" name="Nat. Genet.">
        <title>The gene encoding gigaxonin, a new member of the cytoskeletal BTB/kelch repeat family, is mutated in giant axonal neuropathy.</title>
        <authorList>
            <person name="Bomont P."/>
            <person name="Cavalier L."/>
            <person name="Blondeau F."/>
            <person name="Ben-Hamida C."/>
            <person name="Belal S."/>
            <person name="Tazir M."/>
            <person name="Demir E."/>
            <person name="Topaloglu H."/>
            <person name="Korinthenberg R."/>
            <person name="Tueysuez B."/>
            <person name="Landrieu P."/>
            <person name="Hentati F."/>
            <person name="Koenig M."/>
        </authorList>
    </citation>
    <scope>NUCLEOTIDE SEQUENCE [MRNA]</scope>
    <scope>VARIANTS GAN1 SER-15; GLY-52; LEU-79; PHE-82; HIS-138; GLN-269; ARG-309; LYS-486; CYS-545 AND TYR-570</scope>
    <source>
        <tissue>Brain</tissue>
    </source>
</reference>
<reference key="2">
    <citation type="journal article" date="2004" name="Genome Res.">
        <title>The status, quality, and expansion of the NIH full-length cDNA project: the Mammalian Gene Collection (MGC).</title>
        <authorList>
            <consortium name="The MGC Project Team"/>
        </authorList>
    </citation>
    <scope>NUCLEOTIDE SEQUENCE [LARGE SCALE MRNA]</scope>
    <source>
        <tissue>Placenta</tissue>
    </source>
</reference>
<reference key="3">
    <citation type="journal article" date="2002" name="J. Cell Biol.">
        <title>Microtubule-associated protein 1B: a neuronal binding partner for gigaxonin.</title>
        <authorList>
            <person name="Ding J."/>
            <person name="Liu J.-J."/>
            <person name="Kowal A.S."/>
            <person name="Nardine T."/>
            <person name="Bhattacharya P."/>
            <person name="Lee A."/>
            <person name="Yang Y."/>
        </authorList>
    </citation>
    <scope>FUNCTION</scope>
    <scope>INTERACTION WITH MAP1B</scope>
    <scope>SUBCELLULAR LOCATION</scope>
    <scope>TISSUE SPECIFICITY</scope>
</reference>
<reference key="4">
    <citation type="journal article" date="2003" name="Nat. Cell Biol.">
        <title>Targeting of protein ubiquitination by BTB-Cullin 3-Roc1 ubiquitin ligases.</title>
        <authorList>
            <person name="Furukawa M."/>
            <person name="He Y.J."/>
            <person name="Borchers C."/>
            <person name="Xiong Y."/>
        </authorList>
    </citation>
    <scope>INTERACTION WITH CUL3</scope>
</reference>
<reference key="5">
    <citation type="journal article" date="2005" name="Curr. Biol.">
        <title>Gigaxonin interacts with tubulin folding cofactor B and controls its degradation through the ubiquitin-proteasome pathway.</title>
        <authorList>
            <person name="Wang W."/>
            <person name="Ding J."/>
            <person name="Allen E."/>
            <person name="Zhu P."/>
            <person name="Zhang L."/>
            <person name="Vogel H."/>
            <person name="Yang Y."/>
        </authorList>
    </citation>
    <scope>FUNCTION</scope>
    <scope>INTERACTION WITH TBCB</scope>
    <scope>CHARACTERIZATION OF VARIANTS GAN1 SER-15; PHE-82 AND CYS-545</scope>
</reference>
<reference key="6">
    <citation type="journal article" date="2005" name="J. Biol. Chem.">
        <title>Ubiquitination of Keap1, a BTB-Kelch substrate adaptor protein for Cul3, targets Keap1 for degradation by a proteasome-independent pathway.</title>
        <authorList>
            <person name="Zhang D.D."/>
            <person name="Lo S.C."/>
            <person name="Sun Z."/>
            <person name="Habib G.M."/>
            <person name="Lieberman M.W."/>
            <person name="Hannink M."/>
        </authorList>
    </citation>
    <scope>FUNCTION</scope>
    <scope>IDENTIFICATION IN A COMPLEX WITH CUL3 AND RBX1</scope>
    <scope>UBIQUITINATION</scope>
</reference>
<reference key="7">
    <citation type="journal article" date="2005" name="Nature">
        <title>Gigaxonin-controlled degradation of MAP1B light chain is critical to neuronal survival.</title>
        <authorList>
            <person name="Allen E."/>
            <person name="Ding J."/>
            <person name="Wang W."/>
            <person name="Pramanik S."/>
            <person name="Chou J."/>
            <person name="Yau V."/>
            <person name="Yang Y."/>
        </authorList>
    </citation>
    <scope>FUNCTION</scope>
    <scope>INTERACTION WITH UBA1 AND MAP1B</scope>
</reference>
<reference key="8">
    <citation type="journal article" date="2009" name="PLoS ONE">
        <title>Ectodermal-neural cortex 1 down-regulates Nrf2 at the translational level.</title>
        <authorList>
            <person name="Wang X.J."/>
            <person name="Zhang D.D."/>
        </authorList>
    </citation>
    <scope>SUBCELLULAR LOCATION</scope>
</reference>
<reference key="9">
    <citation type="journal article" date="2009" name="Mol. Cell">
        <title>Structures of SPOP-substrate complexes: insights into molecular architectures of BTB-Cul3 ubiquitin ligases.</title>
        <authorList>
            <person name="Zhuang M."/>
            <person name="Calabrese M.F."/>
            <person name="Liu J."/>
            <person name="Waddell M.B."/>
            <person name="Nourse A."/>
            <person name="Hammel M."/>
            <person name="Miller D.J."/>
            <person name="Walden H."/>
            <person name="Duda D.M."/>
            <person name="Seyedin S.N."/>
            <person name="Hoggard T."/>
            <person name="Harper J.W."/>
            <person name="White K.P."/>
            <person name="Schulman B.A."/>
        </authorList>
    </citation>
    <scope>X-RAY CRYSTALLOGRAPHY (2.8 ANGSTROMS) OF 1-254</scope>
</reference>
<reference key="10">
    <citation type="submission" date="2011-07" db="PDB data bank">
        <title>Structure of the BTB (tramtrack and bric a brac) domain of human gigaxonin.</title>
        <authorList>
            <consortium name="Structural genomics consortium (SGC)"/>
        </authorList>
    </citation>
    <scope>X-RAY CRYSTALLOGRAPHY (2.4 ANGSTROMS) OF 6-126</scope>
</reference>
<reference key="11">
    <citation type="journal article" date="2002" name="Neurology">
        <title>Giant axonal neuropathy (GAN): case report and two novel mutations in the gigaxonin gene.</title>
        <authorList>
            <person name="Kuhlenbaumer G."/>
            <person name="Young P."/>
            <person name="Oberwittler C."/>
            <person name="Hunermund G."/>
            <person name="Schirmacher A."/>
            <person name="Domschke K."/>
            <person name="Ringelstein B."/>
            <person name="Stogbauer F."/>
        </authorList>
    </citation>
    <scope>VARIANT GAN1 THR-423</scope>
</reference>
<reference key="12">
    <citation type="journal article" date="2002" name="Neurology">
        <authorList>
            <person name="Kuhlenbaumer G."/>
            <person name="Young P."/>
            <person name="Oberwittler C."/>
            <person name="Hunermund G."/>
            <person name="Schirmacher A."/>
            <person name="Domschke K."/>
            <person name="Ringelstein B."/>
            <person name="Stogbauer F."/>
        </authorList>
    </citation>
    <scope>ERRATUM OF PUBMED:11971098</scope>
</reference>
<reference key="13">
    <citation type="journal article" date="2003" name="Hum. Mutat.">
        <title>Identification of seven novel mutations in the GAN gene.</title>
        <authorList>
            <person name="Bomont P."/>
            <person name="Ioos C."/>
            <person name="Yalcinkaya C."/>
            <person name="Korinthenberg R."/>
            <person name="Vallat J.-M."/>
            <person name="Assami S."/>
            <person name="Munnich A."/>
            <person name="Chabrol B."/>
            <person name="Kurlemann G."/>
            <person name="Tazir M."/>
            <person name="Koenig M."/>
        </authorList>
    </citation>
    <scope>VARIANTS GAN1 PHE-86; GLN-269 AND ARG-368</scope>
</reference>
<reference key="14">
    <citation type="journal article" date="2007" name="J. Neurol. Neurosurg. Psych.">
        <title>New mutations, genotype phenotype studies and manifesting carriers in giant axonal neuropathy.</title>
        <authorList>
            <person name="Houlden H."/>
            <person name="Groves M."/>
            <person name="Miedzybrodzka Z."/>
            <person name="Roper H."/>
            <person name="Willis T."/>
            <person name="Winer J."/>
            <person name="Cole G."/>
            <person name="Reilly M.M."/>
        </authorList>
    </citation>
    <scope>VARIANTS GAN1 PRO-51 AND LEU-315</scope>
</reference>
<reference key="15">
    <citation type="journal article" date="2007" name="Neuromuscul. Disord.">
        <title>Genotype-phenotype analysis in patients with giant axonal neuropathy (GAN).</title>
        <authorList>
            <person name="Koop O."/>
            <person name="Schirmacher A."/>
            <person name="Nelis E."/>
            <person name="Timmerman V."/>
            <person name="De Jonghe P."/>
            <person name="Ringelstein B."/>
            <person name="Rasic V.M."/>
            <person name="Evrard P."/>
            <person name="Gaertner J."/>
            <person name="Claeys K.G."/>
            <person name="Appenzeller S."/>
            <person name="Rautenstrauss B."/>
            <person name="Huehne K."/>
            <person name="Ramos-Arroyo M.A."/>
            <person name="Woerle H."/>
            <person name="Moilanen J.S."/>
            <person name="Hammans S."/>
            <person name="Kuhlenbaeumer G."/>
        </authorList>
    </citation>
    <scope>VARIANTS GAN1 CYS-89; PHE-195; ARG-368; THR-423; ARG-474 AND HIS-545</scope>
</reference>
<reference key="16">
    <citation type="journal article" date="2014" name="J. Neurol.">
        <title>Whole-exome sequencing in patients with inherited neuropathies: outcome and challenges.</title>
        <authorList>
            <person name="Schabhuettl M."/>
            <person name="Wieland T."/>
            <person name="Senderek J."/>
            <person name="Baets J."/>
            <person name="Timmerman V."/>
            <person name="De Jonghe P."/>
            <person name="Reilly M.M."/>
            <person name="Stieglbauer K."/>
            <person name="Laich E."/>
            <person name="Windhager R."/>
            <person name="Erwa W."/>
            <person name="Trajanoski S."/>
            <person name="Strom T.M."/>
            <person name="Auer-Grumbach M."/>
        </authorList>
    </citation>
    <scope>VARIANTS THR-102 AND ILE-438</scope>
</reference>
<sequence>MAEGSAVSDPQHAARLLRALSSFREESRFCDAHLVLDGEEIPVQKNILAAASPYIRTKLNYNPPKDDGSTYKIELEGISVMVMREILDYIFSGQIRLNEDTIQDVVQAADLLLLTDLKTLCCEFLEGCIAAENCIGIRDFALHYCLHHVHYLATEYLETHFRDVSSTEEFLELSPQKLKEVISLEKLNVGNERYVFEAVIRWIAHDTEIRKVHMKDVMSALWVSGLDSSYLREQMLNEPLVREIVKECSNIPLSQPQQGEAMLANFKPRGYSECIVTVGGEERVSRKPTAAMRCMCPLYDPNRQLWIELAPLSMPRINHGVLSAEGFLFVFGGQDENKQTLSSGEKYDPDANTWTALPPMNEARHNFGIVEIDGMLYILGGEDGEKELISMECYDIYSKTWTKQPDLTMVRKIGCYAAMKKKIYAMGGGSYGKLFESVECYDPRTQQWTAICPLKERRFGAVACGVAMELYVFGGVRSREDAQGSEMVTCKSEFYHDEFKRWIYLNDQNLCIPASSSFVYGAVPIGASIYVIGDLDTGTNYDYVREFKRSTGTWHHTKPLLPSDLRRTGCAALRIANCKLFRLQLQQGLFRIRVHSP</sequence>
<dbReference type="EMBL" id="AF291673">
    <property type="protein sequence ID" value="AAG35311.1"/>
    <property type="molecule type" value="mRNA"/>
</dbReference>
<dbReference type="EMBL" id="BC044840">
    <property type="protein sequence ID" value="AAH44840.1"/>
    <property type="molecule type" value="mRNA"/>
</dbReference>
<dbReference type="CCDS" id="CCDS10935.1"/>
<dbReference type="RefSeq" id="NP_071324.1">
    <property type="nucleotide sequence ID" value="NM_022041.4"/>
</dbReference>
<dbReference type="PDB" id="2PPI">
    <property type="method" value="X-ray"/>
    <property type="resolution" value="2.40 A"/>
    <property type="chains" value="A=6-126"/>
</dbReference>
<dbReference type="PDB" id="3HVE">
    <property type="method" value="X-ray"/>
    <property type="resolution" value="2.80 A"/>
    <property type="chains" value="A/B=1-254"/>
</dbReference>
<dbReference type="PDBsum" id="2PPI"/>
<dbReference type="PDBsum" id="3HVE"/>
<dbReference type="SMR" id="Q9H2C0"/>
<dbReference type="BioGRID" id="113800">
    <property type="interactions" value="272"/>
</dbReference>
<dbReference type="ComplexPortal" id="CPX-8102">
    <property type="entry name" value="CRL3 E3 ubiquitin ligase complex, KLHL16 variant"/>
</dbReference>
<dbReference type="CORUM" id="Q9H2C0"/>
<dbReference type="FunCoup" id="Q9H2C0">
    <property type="interactions" value="584"/>
</dbReference>
<dbReference type="IntAct" id="Q9H2C0">
    <property type="interactions" value="62"/>
</dbReference>
<dbReference type="MINT" id="Q9H2C0"/>
<dbReference type="STRING" id="9606.ENSP00000497351"/>
<dbReference type="GlyCosmos" id="Q9H2C0">
    <property type="glycosylation" value="9 sites, 1 glycan"/>
</dbReference>
<dbReference type="GlyGen" id="Q9H2C0">
    <property type="glycosylation" value="9 sites, 1 O-linked glycan (9 sites)"/>
</dbReference>
<dbReference type="iPTMnet" id="Q9H2C0"/>
<dbReference type="PhosphoSitePlus" id="Q9H2C0"/>
<dbReference type="BioMuta" id="GAN"/>
<dbReference type="DMDM" id="13626745"/>
<dbReference type="jPOST" id="Q9H2C0"/>
<dbReference type="MassIVE" id="Q9H2C0"/>
<dbReference type="PaxDb" id="9606-ENSP00000476795"/>
<dbReference type="PeptideAtlas" id="Q9H2C0"/>
<dbReference type="ProteomicsDB" id="80525"/>
<dbReference type="Pumba" id="Q9H2C0"/>
<dbReference type="Antibodypedia" id="71668">
    <property type="antibodies" value="128 antibodies from 23 providers"/>
</dbReference>
<dbReference type="DNASU" id="8139"/>
<dbReference type="Ensembl" id="ENST00000648994.2">
    <property type="protein sequence ID" value="ENSP00000497351.1"/>
    <property type="gene ID" value="ENSG00000261609.9"/>
</dbReference>
<dbReference type="Ensembl" id="ENST00000718305.1">
    <property type="protein sequence ID" value="ENSP00000520738.1"/>
    <property type="gene ID" value="ENSG00000261609.9"/>
</dbReference>
<dbReference type="GeneID" id="8139"/>
<dbReference type="KEGG" id="hsa:8139"/>
<dbReference type="MANE-Select" id="ENST00000648994.2">
    <property type="protein sequence ID" value="ENSP00000497351.1"/>
    <property type="RefSeq nucleotide sequence ID" value="NM_022041.4"/>
    <property type="RefSeq protein sequence ID" value="NP_071324.1"/>
</dbReference>
<dbReference type="UCSC" id="uc002fgo.4">
    <property type="organism name" value="human"/>
</dbReference>
<dbReference type="AGR" id="HGNC:4137"/>
<dbReference type="CTD" id="8139"/>
<dbReference type="DisGeNET" id="8139"/>
<dbReference type="GeneCards" id="GAN"/>
<dbReference type="GeneReviews" id="GAN"/>
<dbReference type="HGNC" id="HGNC:4137">
    <property type="gene designation" value="GAN"/>
</dbReference>
<dbReference type="HPA" id="ENSG00000261609">
    <property type="expression patterns" value="Tissue enriched (skin)"/>
</dbReference>
<dbReference type="MalaCards" id="GAN"/>
<dbReference type="MIM" id="256850">
    <property type="type" value="phenotype"/>
</dbReference>
<dbReference type="MIM" id="605379">
    <property type="type" value="gene"/>
</dbReference>
<dbReference type="neXtProt" id="NX_Q9H2C0"/>
<dbReference type="OpenTargets" id="ENSG00000261609"/>
<dbReference type="Orphanet" id="643">
    <property type="disease" value="Giant axonal neuropathy"/>
</dbReference>
<dbReference type="PharmGKB" id="PA28550"/>
<dbReference type="VEuPathDB" id="HostDB:ENSG00000261609"/>
<dbReference type="eggNOG" id="KOG4441">
    <property type="taxonomic scope" value="Eukaryota"/>
</dbReference>
<dbReference type="GeneTree" id="ENSGT00940000155273"/>
<dbReference type="HOGENOM" id="CLU_004253_14_2_1"/>
<dbReference type="InParanoid" id="Q9H2C0"/>
<dbReference type="OMA" id="QHVHYVA"/>
<dbReference type="OrthoDB" id="45365at2759"/>
<dbReference type="PAN-GO" id="Q9H2C0">
    <property type="GO annotations" value="0 GO annotations based on evolutionary models"/>
</dbReference>
<dbReference type="PhylomeDB" id="Q9H2C0"/>
<dbReference type="TreeFam" id="TF329218"/>
<dbReference type="PathwayCommons" id="Q9H2C0"/>
<dbReference type="Reactome" id="R-HSA-8951664">
    <property type="pathway name" value="Neddylation"/>
</dbReference>
<dbReference type="Reactome" id="R-HSA-983168">
    <property type="pathway name" value="Antigen processing: Ubiquitination &amp; Proteasome degradation"/>
</dbReference>
<dbReference type="SignaLink" id="Q9H2C0"/>
<dbReference type="SIGNOR" id="Q9H2C0"/>
<dbReference type="UniPathway" id="UPA00143"/>
<dbReference type="BioGRID-ORCS" id="8139">
    <property type="hits" value="16 hits in 1193 CRISPR screens"/>
</dbReference>
<dbReference type="ChiTaRS" id="GAN">
    <property type="organism name" value="human"/>
</dbReference>
<dbReference type="EvolutionaryTrace" id="Q9H2C0"/>
<dbReference type="GeneWiki" id="Gigaxonin"/>
<dbReference type="GenomeRNAi" id="8139"/>
<dbReference type="Pharos" id="Q9H2C0">
    <property type="development level" value="Tbio"/>
</dbReference>
<dbReference type="PRO" id="PR:Q9H2C0"/>
<dbReference type="Proteomes" id="UP000005640">
    <property type="component" value="Chromosome 16"/>
</dbReference>
<dbReference type="RNAct" id="Q9H2C0">
    <property type="molecule type" value="protein"/>
</dbReference>
<dbReference type="Bgee" id="ENSG00000261609">
    <property type="expression patterns" value="Expressed in upper leg skin and 177 other cell types or tissues"/>
</dbReference>
<dbReference type="ExpressionAtlas" id="Q9H2C0">
    <property type="expression patterns" value="baseline and differential"/>
</dbReference>
<dbReference type="GO" id="GO:0031463">
    <property type="term" value="C:Cul3-RING ubiquitin ligase complex"/>
    <property type="evidence" value="ECO:0000314"/>
    <property type="project" value="UniProtKB"/>
</dbReference>
<dbReference type="GO" id="GO:0005737">
    <property type="term" value="C:cytoplasm"/>
    <property type="evidence" value="ECO:0000314"/>
    <property type="project" value="UniProtKB"/>
</dbReference>
<dbReference type="GO" id="GO:0005856">
    <property type="term" value="C:cytoskeleton"/>
    <property type="evidence" value="ECO:0007669"/>
    <property type="project" value="UniProtKB-SubCell"/>
</dbReference>
<dbReference type="GO" id="GO:0005829">
    <property type="term" value="C:cytosol"/>
    <property type="evidence" value="ECO:0000304"/>
    <property type="project" value="Reactome"/>
</dbReference>
<dbReference type="GO" id="GO:1990756">
    <property type="term" value="F:ubiquitin-like ligase-substrate adaptor activity"/>
    <property type="evidence" value="ECO:0000318"/>
    <property type="project" value="GO_Central"/>
</dbReference>
<dbReference type="GO" id="GO:0007010">
    <property type="term" value="P:cytoskeleton organization"/>
    <property type="evidence" value="ECO:0007669"/>
    <property type="project" value="InterPro"/>
</dbReference>
<dbReference type="GO" id="GO:0043161">
    <property type="term" value="P:proteasome-mediated ubiquitin-dependent protein catabolic process"/>
    <property type="evidence" value="ECO:0000318"/>
    <property type="project" value="GO_Central"/>
</dbReference>
<dbReference type="GO" id="GO:0016567">
    <property type="term" value="P:protein ubiquitination"/>
    <property type="evidence" value="ECO:0000314"/>
    <property type="project" value="UniProtKB"/>
</dbReference>
<dbReference type="CDD" id="cd18455">
    <property type="entry name" value="BACK_KLHL16_gigaxonin"/>
    <property type="match status" value="1"/>
</dbReference>
<dbReference type="CDD" id="cd18245">
    <property type="entry name" value="BTB_POZ_KLHL16_gigaxonin"/>
    <property type="match status" value="1"/>
</dbReference>
<dbReference type="FunFam" id="2.120.10.80:FF:000032">
    <property type="entry name" value="Gigaxonin"/>
    <property type="match status" value="1"/>
</dbReference>
<dbReference type="FunFam" id="3.30.710.10:FF:000108">
    <property type="entry name" value="gigaxonin isoform X1"/>
    <property type="match status" value="1"/>
</dbReference>
<dbReference type="FunFam" id="1.25.40.420:FF:000011">
    <property type="entry name" value="gigaxonin isoform X2"/>
    <property type="match status" value="1"/>
</dbReference>
<dbReference type="Gene3D" id="1.25.40.420">
    <property type="match status" value="1"/>
</dbReference>
<dbReference type="Gene3D" id="2.120.10.80">
    <property type="entry name" value="Kelch-type beta propeller"/>
    <property type="match status" value="1"/>
</dbReference>
<dbReference type="Gene3D" id="3.30.710.10">
    <property type="entry name" value="Potassium Channel Kv1.1, Chain A"/>
    <property type="match status" value="1"/>
</dbReference>
<dbReference type="InterPro" id="IPR011705">
    <property type="entry name" value="BACK"/>
</dbReference>
<dbReference type="InterPro" id="IPR017096">
    <property type="entry name" value="BTB-kelch_protein"/>
</dbReference>
<dbReference type="InterPro" id="IPR000210">
    <property type="entry name" value="BTB/POZ_dom"/>
</dbReference>
<dbReference type="InterPro" id="IPR015915">
    <property type="entry name" value="Kelch-typ_b-propeller"/>
</dbReference>
<dbReference type="InterPro" id="IPR006652">
    <property type="entry name" value="Kelch_1"/>
</dbReference>
<dbReference type="InterPro" id="IPR030579">
    <property type="entry name" value="KLHL16_BACK"/>
</dbReference>
<dbReference type="InterPro" id="IPR047070">
    <property type="entry name" value="KLHL16_BTB_POZ"/>
</dbReference>
<dbReference type="InterPro" id="IPR011333">
    <property type="entry name" value="SKP1/BTB/POZ_sf"/>
</dbReference>
<dbReference type="PANTHER" id="PTHR45632:SF17">
    <property type="entry name" value="KELCH-LIKE PROTEIN 31"/>
    <property type="match status" value="1"/>
</dbReference>
<dbReference type="PANTHER" id="PTHR45632">
    <property type="entry name" value="LD33804P"/>
    <property type="match status" value="1"/>
</dbReference>
<dbReference type="Pfam" id="PF07707">
    <property type="entry name" value="BACK"/>
    <property type="match status" value="1"/>
</dbReference>
<dbReference type="Pfam" id="PF00651">
    <property type="entry name" value="BTB"/>
    <property type="match status" value="1"/>
</dbReference>
<dbReference type="Pfam" id="PF24681">
    <property type="entry name" value="Kelch_KLHDC2_KLHL20_DRC7"/>
    <property type="match status" value="1"/>
</dbReference>
<dbReference type="PIRSF" id="PIRSF037037">
    <property type="entry name" value="Kelch-like_protein_gigaxonin"/>
    <property type="match status" value="1"/>
</dbReference>
<dbReference type="SMART" id="SM00875">
    <property type="entry name" value="BACK"/>
    <property type="match status" value="1"/>
</dbReference>
<dbReference type="SMART" id="SM00225">
    <property type="entry name" value="BTB"/>
    <property type="match status" value="1"/>
</dbReference>
<dbReference type="SMART" id="SM00612">
    <property type="entry name" value="Kelch"/>
    <property type="match status" value="5"/>
</dbReference>
<dbReference type="SUPFAM" id="SSF117281">
    <property type="entry name" value="Kelch motif"/>
    <property type="match status" value="1"/>
</dbReference>
<dbReference type="SUPFAM" id="SSF54695">
    <property type="entry name" value="POZ domain"/>
    <property type="match status" value="1"/>
</dbReference>
<dbReference type="PROSITE" id="PS50097">
    <property type="entry name" value="BTB"/>
    <property type="match status" value="1"/>
</dbReference>
<evidence type="ECO:0000255" key="1">
    <source>
        <dbReference type="PROSITE-ProRule" id="PRU00037"/>
    </source>
</evidence>
<evidence type="ECO:0000269" key="2">
    <source>
    </source>
</evidence>
<evidence type="ECO:0000269" key="3">
    <source>
    </source>
</evidence>
<evidence type="ECO:0000269" key="4">
    <source>
    </source>
</evidence>
<evidence type="ECO:0000269" key="5">
    <source>
    </source>
</evidence>
<evidence type="ECO:0000269" key="6">
    <source>
    </source>
</evidence>
<evidence type="ECO:0000269" key="7">
    <source>
    </source>
</evidence>
<evidence type="ECO:0000269" key="8">
    <source>
    </source>
</evidence>
<evidence type="ECO:0000269" key="9">
    <source>
    </source>
</evidence>
<evidence type="ECO:0000269" key="10">
    <source>
    </source>
</evidence>
<evidence type="ECO:0000269" key="11">
    <source>
    </source>
</evidence>
<evidence type="ECO:0000269" key="12">
    <source>
    </source>
</evidence>
<evidence type="ECO:0007829" key="13">
    <source>
        <dbReference type="PDB" id="2PPI"/>
    </source>
</evidence>
<evidence type="ECO:0007829" key="14">
    <source>
        <dbReference type="PDB" id="3HVE"/>
    </source>
</evidence>
<feature type="chain" id="PRO_0000119070" description="Gigaxonin">
    <location>
        <begin position="1"/>
        <end position="597"/>
    </location>
</feature>
<feature type="domain" description="BTB" evidence="1">
    <location>
        <begin position="30"/>
        <end position="99"/>
    </location>
</feature>
<feature type="domain" description="BACK">
    <location>
        <begin position="134"/>
        <end position="236"/>
    </location>
</feature>
<feature type="repeat" description="Kelch 1">
    <location>
        <begin position="274"/>
        <end position="326"/>
    </location>
</feature>
<feature type="repeat" description="Kelch 2">
    <location>
        <begin position="327"/>
        <end position="374"/>
    </location>
</feature>
<feature type="repeat" description="Kelch 3">
    <location>
        <begin position="376"/>
        <end position="421"/>
    </location>
</feature>
<feature type="repeat" description="Kelch 4">
    <location>
        <begin position="422"/>
        <end position="468"/>
    </location>
</feature>
<feature type="repeat" description="Kelch 5">
    <location>
        <begin position="470"/>
        <end position="522"/>
    </location>
</feature>
<feature type="repeat" description="Kelch 6">
    <location>
        <begin position="528"/>
        <end position="574"/>
    </location>
</feature>
<feature type="sequence variant" id="VAR_010759" description="In GAN1; no effect on binding to TBCB; dbSNP:rs119485093." evidence="2 9">
    <original>R</original>
    <variation>S</variation>
    <location>
        <position position="15"/>
    </location>
</feature>
<feature type="sequence variant" id="VAR_054113" description="In GAN1; dbSNP:rs750258209." evidence="10">
    <original>A</original>
    <variation>P</variation>
    <location>
        <position position="51"/>
    </location>
</feature>
<feature type="sequence variant" id="VAR_010760" description="In GAN1; dbSNP:rs1597385719." evidence="2">
    <original>S</original>
    <variation>G</variation>
    <location>
        <position position="52"/>
    </location>
</feature>
<feature type="sequence variant" id="VAR_010761" description="In GAN1; dbSNP:rs1310137430." evidence="2">
    <original>S</original>
    <variation>L</variation>
    <location>
        <position position="79"/>
    </location>
</feature>
<feature type="sequence variant" id="VAR_010762" description="In GAN1; no effect on binding to TBCB; dbSNP:rs371054532." evidence="2 9">
    <original>V</original>
    <variation>F</variation>
    <location>
        <position position="82"/>
    </location>
</feature>
<feature type="sequence variant" id="VAR_015680" description="In GAN1; dbSNP:rs1597400020." evidence="5">
    <original>I</original>
    <variation>F</variation>
    <location>
        <position position="86"/>
    </location>
</feature>
<feature type="sequence variant" id="VAR_054114" description="In GAN1; dbSNP:rs1597400024." evidence="11">
    <original>Y</original>
    <variation>C</variation>
    <location>
        <position position="89"/>
    </location>
</feature>
<feature type="sequence variant" id="VAR_073289" description="Found in hereditary motor and sensory neuropathy; likely pathogenic; dbSNP:rs1597401492." evidence="12">
    <original>I</original>
    <variation>T</variation>
    <location>
        <position position="102"/>
    </location>
</feature>
<feature type="sequence variant" id="VAR_010763" description="In GAN1; dbSNP:rs119485092." evidence="2">
    <original>R</original>
    <variation>H</variation>
    <location>
        <position position="138"/>
    </location>
</feature>
<feature type="sequence variant" id="VAR_054115" description="In GAN1; dbSNP:rs1432344872." evidence="11">
    <original>V</original>
    <variation>F</variation>
    <location>
        <position position="195"/>
    </location>
</feature>
<feature type="sequence variant" id="VAR_010764" description="In GAN1; dbSNP:rs759581558." evidence="2 5">
    <original>R</original>
    <variation>Q</variation>
    <location>
        <position position="269"/>
    </location>
</feature>
<feature type="sequence variant" id="VAR_010765" description="In GAN1; dbSNP:rs1597403384." evidence="2">
    <original>L</original>
    <variation>R</variation>
    <location>
        <position position="309"/>
    </location>
</feature>
<feature type="sequence variant" id="VAR_054116" description="In GAN1; dbSNP:rs144486241." evidence="10">
    <original>P</original>
    <variation>L</variation>
    <location>
        <position position="315"/>
    </location>
</feature>
<feature type="sequence variant" id="VAR_015681" description="In GAN1; dbSNP:rs758756818." evidence="5 11">
    <original>G</original>
    <variation>R</variation>
    <location>
        <position position="368"/>
    </location>
</feature>
<feature type="sequence variant" id="VAR_015560" description="In GAN1; dbSNP:rs119485091." evidence="3 11">
    <original>I</original>
    <variation>T</variation>
    <location>
        <position position="423"/>
    </location>
</feature>
<feature type="sequence variant" id="VAR_073290" description="Found in hereditary motor and sensory neuropathy; likely pathogenic; dbSNP:rs1246053880." evidence="12">
    <original>V</original>
    <variation>I</variation>
    <location>
        <position position="438"/>
    </location>
</feature>
<feature type="sequence variant" id="VAR_054117" description="In GAN1; dbSNP:rs1435035575." evidence="11">
    <original>G</original>
    <variation>R</variation>
    <location>
        <position position="474"/>
    </location>
</feature>
<feature type="sequence variant" id="VAR_010757" description="In GAN1; dbSNP:rs119485088." evidence="2">
    <original>E</original>
    <variation>K</variation>
    <location>
        <position position="486"/>
    </location>
</feature>
<feature type="sequence variant" id="VAR_010766" description="In GAN1; complete loss of binding to TBCB; dbSNP:rs112201678." evidence="2 9">
    <original>R</original>
    <variation>C</variation>
    <location>
        <position position="545"/>
    </location>
</feature>
<feature type="sequence variant" id="VAR_054118" description="In GAN1; dbSNP:rs746486469." evidence="11">
    <original>R</original>
    <variation>H</variation>
    <location>
        <position position="545"/>
    </location>
</feature>
<feature type="sequence variant" id="VAR_010767" description="In GAN1; dbSNP:rs1597414244." evidence="2">
    <original>C</original>
    <variation>Y</variation>
    <location>
        <position position="570"/>
    </location>
</feature>
<feature type="helix" evidence="13">
    <location>
        <begin position="12"/>
        <end position="22"/>
    </location>
</feature>
<feature type="strand" evidence="13">
    <location>
        <begin position="32"/>
        <end position="36"/>
    </location>
</feature>
<feature type="strand" evidence="13">
    <location>
        <begin position="39"/>
        <end position="43"/>
    </location>
</feature>
<feature type="helix" evidence="13">
    <location>
        <begin position="45"/>
        <end position="51"/>
    </location>
</feature>
<feature type="helix" evidence="13">
    <location>
        <begin position="53"/>
        <end position="61"/>
    </location>
</feature>
<feature type="strand" evidence="13">
    <location>
        <begin position="72"/>
        <end position="74"/>
    </location>
</feature>
<feature type="helix" evidence="13">
    <location>
        <begin position="80"/>
        <end position="90"/>
    </location>
</feature>
<feature type="turn" evidence="13">
    <location>
        <begin position="99"/>
        <end position="101"/>
    </location>
</feature>
<feature type="helix" evidence="13">
    <location>
        <begin position="102"/>
        <end position="111"/>
    </location>
</feature>
<feature type="helix" evidence="13">
    <location>
        <begin position="115"/>
        <end position="122"/>
    </location>
</feature>
<feature type="helix" evidence="14">
    <location>
        <begin position="135"/>
        <end position="143"/>
    </location>
</feature>
<feature type="helix" evidence="14">
    <location>
        <begin position="147"/>
        <end position="164"/>
    </location>
</feature>
<feature type="helix" evidence="14">
    <location>
        <begin position="168"/>
        <end position="171"/>
    </location>
</feature>
<feature type="helix" evidence="14">
    <location>
        <begin position="175"/>
        <end position="183"/>
    </location>
</feature>
<feature type="helix" evidence="14">
    <location>
        <begin position="196"/>
        <end position="199"/>
    </location>
</feature>
<feature type="turn" evidence="14">
    <location>
        <begin position="200"/>
        <end position="202"/>
    </location>
</feature>
<feature type="turn" evidence="14">
    <location>
        <begin position="211"/>
        <end position="213"/>
    </location>
</feature>
<feature type="helix" evidence="14">
    <location>
        <begin position="214"/>
        <end position="224"/>
    </location>
</feature>
<feature type="helix" evidence="14">
    <location>
        <begin position="231"/>
        <end position="236"/>
    </location>
</feature>
<feature type="helix" evidence="14">
    <location>
        <begin position="241"/>
        <end position="245"/>
    </location>
</feature>